<organism>
    <name type="scientific">Kluyveromyces lactis (strain ATCC 8585 / CBS 2359 / DSM 70799 / NBRC 1267 / NRRL Y-1140 / WM37)</name>
    <name type="common">Yeast</name>
    <name type="synonym">Candida sphaerica</name>
    <dbReference type="NCBI Taxonomy" id="284590"/>
    <lineage>
        <taxon>Eukaryota</taxon>
        <taxon>Fungi</taxon>
        <taxon>Dikarya</taxon>
        <taxon>Ascomycota</taxon>
        <taxon>Saccharomycotina</taxon>
        <taxon>Saccharomycetes</taxon>
        <taxon>Saccharomycetales</taxon>
        <taxon>Saccharomycetaceae</taxon>
        <taxon>Kluyveromyces</taxon>
    </lineage>
</organism>
<proteinExistence type="inferred from homology"/>
<comment type="function">
    <text evidence="1">Component of the biogenesis of lysosome-related organelles complex-1 (BLOC-1), a complex that is involved in endosomal cargo sorting.</text>
</comment>
<comment type="subunit">
    <text evidence="1">Component of the biogenesis of lysosome-related organelles complex-1 (BLOC-1).</text>
</comment>
<comment type="subcellular location">
    <subcellularLocation>
        <location evidence="1">Cytoplasm</location>
    </subcellularLocation>
    <text evidence="1">Punctate pattern.</text>
</comment>
<comment type="similarity">
    <text evidence="4">Belongs to the BLOC1S4 family.</text>
</comment>
<dbReference type="EMBL" id="CR382125">
    <property type="protein sequence ID" value="CAH00010.1"/>
    <property type="molecule type" value="Genomic_DNA"/>
</dbReference>
<dbReference type="RefSeq" id="XP_454923.1">
    <property type="nucleotide sequence ID" value="XM_454923.1"/>
</dbReference>
<dbReference type="FunCoup" id="Q6CMB6">
    <property type="interactions" value="36"/>
</dbReference>
<dbReference type="STRING" id="284590.Q6CMB6"/>
<dbReference type="PaxDb" id="284590-Q6CMB6"/>
<dbReference type="KEGG" id="kla:KLLA0_E21495g"/>
<dbReference type="eggNOG" id="ENOG502S4DQ">
    <property type="taxonomic scope" value="Eukaryota"/>
</dbReference>
<dbReference type="HOGENOM" id="CLU_141728_1_0_1"/>
<dbReference type="InParanoid" id="Q6CMB6"/>
<dbReference type="OMA" id="HFDMLDQ"/>
<dbReference type="Proteomes" id="UP000000598">
    <property type="component" value="Chromosome E"/>
</dbReference>
<dbReference type="GO" id="GO:0031083">
    <property type="term" value="C:BLOC-1 complex"/>
    <property type="evidence" value="ECO:0007669"/>
    <property type="project" value="InterPro"/>
</dbReference>
<dbReference type="GO" id="GO:0005737">
    <property type="term" value="C:cytoplasm"/>
    <property type="evidence" value="ECO:0007669"/>
    <property type="project" value="UniProtKB-SubCell"/>
</dbReference>
<dbReference type="GO" id="GO:0007032">
    <property type="term" value="P:endosome organization"/>
    <property type="evidence" value="ECO:0007669"/>
    <property type="project" value="TreeGrafter"/>
</dbReference>
<dbReference type="CDD" id="cd24144">
    <property type="entry name" value="BLOC1_CNL1"/>
    <property type="match status" value="1"/>
</dbReference>
<dbReference type="InterPro" id="IPR034455">
    <property type="entry name" value="CNL1"/>
</dbReference>
<dbReference type="PANTHER" id="PTHR39145">
    <property type="entry name" value="BIOGENESIS OF LYSOSOME-RELATED ORGANELLES COMPLEX 1 SUBUNIT CNL1"/>
    <property type="match status" value="1"/>
</dbReference>
<dbReference type="PANTHER" id="PTHR39145:SF1">
    <property type="entry name" value="BIOGENESIS OF LYSOSOME-RELATED ORGANELLES COMPLEX 1 SUBUNIT CNL1"/>
    <property type="match status" value="1"/>
</dbReference>
<name>BL1S4_KLULA</name>
<evidence type="ECO:0000250" key="1"/>
<evidence type="ECO:0000255" key="2"/>
<evidence type="ECO:0000256" key="3">
    <source>
        <dbReference type="SAM" id="MobiDB-lite"/>
    </source>
</evidence>
<evidence type="ECO:0000305" key="4"/>
<gene>
    <name type="primary">CLN1</name>
    <name type="ordered locus">KLLA0E21495g</name>
</gene>
<keyword id="KW-0175">Coiled coil</keyword>
<keyword id="KW-0963">Cytoplasm</keyword>
<keyword id="KW-1185">Reference proteome</keyword>
<keyword id="KW-0813">Transport</keyword>
<reference key="1">
    <citation type="journal article" date="2004" name="Nature">
        <title>Genome evolution in yeasts.</title>
        <authorList>
            <person name="Dujon B."/>
            <person name="Sherman D."/>
            <person name="Fischer G."/>
            <person name="Durrens P."/>
            <person name="Casaregola S."/>
            <person name="Lafontaine I."/>
            <person name="de Montigny J."/>
            <person name="Marck C."/>
            <person name="Neuveglise C."/>
            <person name="Talla E."/>
            <person name="Goffard N."/>
            <person name="Frangeul L."/>
            <person name="Aigle M."/>
            <person name="Anthouard V."/>
            <person name="Babour A."/>
            <person name="Barbe V."/>
            <person name="Barnay S."/>
            <person name="Blanchin S."/>
            <person name="Beckerich J.-M."/>
            <person name="Beyne E."/>
            <person name="Bleykasten C."/>
            <person name="Boisrame A."/>
            <person name="Boyer J."/>
            <person name="Cattolico L."/>
            <person name="Confanioleri F."/>
            <person name="de Daruvar A."/>
            <person name="Despons L."/>
            <person name="Fabre E."/>
            <person name="Fairhead C."/>
            <person name="Ferry-Dumazet H."/>
            <person name="Groppi A."/>
            <person name="Hantraye F."/>
            <person name="Hennequin C."/>
            <person name="Jauniaux N."/>
            <person name="Joyet P."/>
            <person name="Kachouri R."/>
            <person name="Kerrest A."/>
            <person name="Koszul R."/>
            <person name="Lemaire M."/>
            <person name="Lesur I."/>
            <person name="Ma L."/>
            <person name="Muller H."/>
            <person name="Nicaud J.-M."/>
            <person name="Nikolski M."/>
            <person name="Oztas S."/>
            <person name="Ozier-Kalogeropoulos O."/>
            <person name="Pellenz S."/>
            <person name="Potier S."/>
            <person name="Richard G.-F."/>
            <person name="Straub M.-L."/>
            <person name="Suleau A."/>
            <person name="Swennen D."/>
            <person name="Tekaia F."/>
            <person name="Wesolowski-Louvel M."/>
            <person name="Westhof E."/>
            <person name="Wirth B."/>
            <person name="Zeniou-Meyer M."/>
            <person name="Zivanovic Y."/>
            <person name="Bolotin-Fukuhara M."/>
            <person name="Thierry A."/>
            <person name="Bouchier C."/>
            <person name="Caudron B."/>
            <person name="Scarpelli C."/>
            <person name="Gaillardin C."/>
            <person name="Weissenbach J."/>
            <person name="Wincker P."/>
            <person name="Souciet J.-L."/>
        </authorList>
    </citation>
    <scope>NUCLEOTIDE SEQUENCE [LARGE SCALE GENOMIC DNA]</scope>
    <source>
        <strain>ATCC 8585 / CBS 2359 / DSM 70799 / NBRC 1267 / NRRL Y-1140 / WM37</strain>
    </source>
</reference>
<sequence>MMSENITAVEPQENNDVEADSDPFNIDKLIVDYDYLLYKIQDELESIQLKTLEICQKQNEIVEHGIIEEVIDGNIGMAKDLLQKCDDLEKHYDQLDAVEGIVVSFKSRLKGVITQYKKYIDTKK</sequence>
<accession>Q6CMB6</accession>
<protein>
    <recommendedName>
        <fullName>Biogenesis of lysosome-related organelles complex 1 subunit CNL1</fullName>
        <shortName>BLOC-1 subunit CNL1</shortName>
    </recommendedName>
    <alternativeName>
        <fullName>CNO-like protein 1</fullName>
    </alternativeName>
</protein>
<feature type="chain" id="PRO_0000410643" description="Biogenesis of lysosome-related organelles complex 1 subunit CNL1">
    <location>
        <begin position="1"/>
        <end position="124"/>
    </location>
</feature>
<feature type="region of interest" description="Disordered" evidence="3">
    <location>
        <begin position="1"/>
        <end position="20"/>
    </location>
</feature>
<feature type="coiled-coil region" evidence="2">
    <location>
        <begin position="75"/>
        <end position="98"/>
    </location>
</feature>